<comment type="function">
    <text evidence="2">Part of the striatin-interacting phosphatase and kinase (STRIPAK) complexes. STRIPAK complexes have critical roles in protein (de)phosphorylation and are regulators of multiple signaling pathways including Hippo, MAPK, nuclear receptor and cytoskeleton remodeling. Different types of STRIPAK complexes are involved in a variety of biological processes such as cell growth, differentiation, apoptosis, metabolism and immune regulation.</text>
</comment>
<comment type="subunit">
    <text evidence="2 4">Binds STRN4 (By similarity). Interacts with DNM1 and EPS15 (PubMed:11872741). Interacts with nucleoside diphosphate kinase (By similarity). Interacts with CTTNBP2 (By similarity). Interacts with CTTNBP2NL (By similarity). Part of the core of STRIPAK complexes composed of PP2A catalytic and scaffolding subunits, the striatins (PP2A regulatory subunits), the striatin-associated proteins MOB4, STRIP1 and STRIP2, PDCD10 and members of the STE20 kinases, such as STK24 and STK26 (By similarity).</text>
</comment>
<comment type="subcellular location">
    <subcellularLocation>
        <location>Cytoplasm</location>
    </subcellularLocation>
    <subcellularLocation>
        <location>Membrane</location>
        <topology>Peripheral membrane protein</topology>
    </subcellularLocation>
    <subcellularLocation>
        <location>Golgi apparatus</location>
        <location>Golgi stack membrane</location>
        <topology>Peripheral membrane protein</topology>
    </subcellularLocation>
    <text>Detected in cell bodies and dendrites of neurons, but not in axons.</text>
</comment>
<comment type="tissue specificity">
    <text evidence="3">Highly expressed in adrenal gland, spinal cord, brain and cerebellum. Detected at lower levels in heart and skeletal muscle, and at very low levels in spleen, liver and intestine.</text>
</comment>
<comment type="PTM">
    <text evidence="1">Phosphorylated on serine residues.</text>
</comment>
<comment type="similarity">
    <text evidence="5">Belongs to the MOB1/phocein family.</text>
</comment>
<name>PHOCN_RAT</name>
<accession>Q9QYW3</accession>
<proteinExistence type="evidence at protein level"/>
<dbReference type="EMBL" id="AJ132008">
    <property type="protein sequence ID" value="CAB57295.1"/>
    <property type="molecule type" value="mRNA"/>
</dbReference>
<dbReference type="EMBL" id="BC085708">
    <property type="protein sequence ID" value="AAH85708.1"/>
    <property type="molecule type" value="mRNA"/>
</dbReference>
<dbReference type="RefSeq" id="NP_598212.1">
    <property type="nucleotide sequence ID" value="NM_133528.1"/>
</dbReference>
<dbReference type="SMR" id="Q9QYW3"/>
<dbReference type="BioGRID" id="251067">
    <property type="interactions" value="4"/>
</dbReference>
<dbReference type="FunCoup" id="Q9QYW3">
    <property type="interactions" value="2932"/>
</dbReference>
<dbReference type="MINT" id="Q9QYW3"/>
<dbReference type="STRING" id="10116.ENSRNOP00000020536"/>
<dbReference type="iPTMnet" id="Q9QYW3"/>
<dbReference type="PhosphoSitePlus" id="Q9QYW3"/>
<dbReference type="SwissPalm" id="Q9QYW3"/>
<dbReference type="jPOST" id="Q9QYW3"/>
<dbReference type="PaxDb" id="10116-ENSRNOP00000020536"/>
<dbReference type="Ensembl" id="ENSRNOT00000103898.1">
    <property type="protein sequence ID" value="ENSRNOP00000092795.1"/>
    <property type="gene ID" value="ENSRNOG00000014980.5"/>
</dbReference>
<dbReference type="GeneID" id="171050"/>
<dbReference type="KEGG" id="rno:171050"/>
<dbReference type="UCSC" id="RGD:620183">
    <property type="organism name" value="rat"/>
</dbReference>
<dbReference type="AGR" id="RGD:620183"/>
<dbReference type="CTD" id="25843"/>
<dbReference type="RGD" id="620183">
    <property type="gene designation" value="Mob4"/>
</dbReference>
<dbReference type="eggNOG" id="KOG1852">
    <property type="taxonomic scope" value="Eukaryota"/>
</dbReference>
<dbReference type="GeneTree" id="ENSGT01120000271909"/>
<dbReference type="HOGENOM" id="CLU_056981_3_0_1"/>
<dbReference type="InParanoid" id="Q9QYW3"/>
<dbReference type="OMA" id="ATCTQMT"/>
<dbReference type="OrthoDB" id="184876at2759"/>
<dbReference type="PhylomeDB" id="Q9QYW3"/>
<dbReference type="TreeFam" id="TF314078"/>
<dbReference type="PRO" id="PR:Q9QYW3"/>
<dbReference type="Proteomes" id="UP000002494">
    <property type="component" value="Chromosome 9"/>
</dbReference>
<dbReference type="Bgee" id="ENSRNOG00000014980">
    <property type="expression patterns" value="Expressed in ovary and 20 other cell types or tissues"/>
</dbReference>
<dbReference type="GO" id="GO:0005737">
    <property type="term" value="C:cytoplasm"/>
    <property type="evidence" value="ECO:0000314"/>
    <property type="project" value="UniProtKB"/>
</dbReference>
<dbReference type="GO" id="GO:0043197">
    <property type="term" value="C:dendritic spine"/>
    <property type="evidence" value="ECO:0000314"/>
    <property type="project" value="RGD"/>
</dbReference>
<dbReference type="GO" id="GO:0090443">
    <property type="term" value="C:FAR/SIN/STRIPAK complex"/>
    <property type="evidence" value="ECO:0000250"/>
    <property type="project" value="UniProtKB"/>
</dbReference>
<dbReference type="GO" id="GO:0098978">
    <property type="term" value="C:glutamatergic synapse"/>
    <property type="evidence" value="ECO:0000266"/>
    <property type="project" value="RGD"/>
</dbReference>
<dbReference type="GO" id="GO:0005794">
    <property type="term" value="C:Golgi apparatus"/>
    <property type="evidence" value="ECO:0000314"/>
    <property type="project" value="UniProtKB"/>
</dbReference>
<dbReference type="GO" id="GO:0032580">
    <property type="term" value="C:Golgi cisterna membrane"/>
    <property type="evidence" value="ECO:0007669"/>
    <property type="project" value="UniProtKB-SubCell"/>
</dbReference>
<dbReference type="GO" id="GO:0043025">
    <property type="term" value="C:neuronal cell body"/>
    <property type="evidence" value="ECO:0000314"/>
    <property type="project" value="RGD"/>
</dbReference>
<dbReference type="GO" id="GO:0048471">
    <property type="term" value="C:perinuclear region of cytoplasm"/>
    <property type="evidence" value="ECO:0000314"/>
    <property type="project" value="RGD"/>
</dbReference>
<dbReference type="GO" id="GO:0098794">
    <property type="term" value="C:postsynapse"/>
    <property type="evidence" value="ECO:0000266"/>
    <property type="project" value="RGD"/>
</dbReference>
<dbReference type="GO" id="GO:0019900">
    <property type="term" value="F:kinase binding"/>
    <property type="evidence" value="ECO:0000353"/>
    <property type="project" value="RGD"/>
</dbReference>
<dbReference type="GO" id="GO:0046872">
    <property type="term" value="F:metal ion binding"/>
    <property type="evidence" value="ECO:0007669"/>
    <property type="project" value="UniProtKB-KW"/>
</dbReference>
<dbReference type="GO" id="GO:0030674">
    <property type="term" value="F:protein-macromolecule adaptor activity"/>
    <property type="evidence" value="ECO:0000250"/>
    <property type="project" value="UniProtKB"/>
</dbReference>
<dbReference type="GO" id="GO:0035331">
    <property type="term" value="P:negative regulation of hippo signaling"/>
    <property type="evidence" value="ECO:0000250"/>
    <property type="project" value="UniProtKB"/>
</dbReference>
<dbReference type="GO" id="GO:0006900">
    <property type="term" value="P:vesicle budding from membrane"/>
    <property type="evidence" value="ECO:0000304"/>
    <property type="project" value="UniProtKB"/>
</dbReference>
<dbReference type="FunFam" id="1.20.140.30:FF:000002">
    <property type="entry name" value="MOB-like protein phocein isoform X1"/>
    <property type="match status" value="1"/>
</dbReference>
<dbReference type="Gene3D" id="1.20.140.30">
    <property type="entry name" value="MOB kinase activator"/>
    <property type="match status" value="1"/>
</dbReference>
<dbReference type="InterPro" id="IPR005301">
    <property type="entry name" value="MOB_kinase_act_fam"/>
</dbReference>
<dbReference type="InterPro" id="IPR036703">
    <property type="entry name" value="MOB_kinase_act_sf"/>
</dbReference>
<dbReference type="PANTHER" id="PTHR22599">
    <property type="entry name" value="MPS ONE BINDER KINASE ACTIVATOR-LIKE MOB"/>
    <property type="match status" value="1"/>
</dbReference>
<dbReference type="Pfam" id="PF03637">
    <property type="entry name" value="Mob1_phocein"/>
    <property type="match status" value="1"/>
</dbReference>
<dbReference type="SMART" id="SM01388">
    <property type="entry name" value="Mob1_phocein"/>
    <property type="match status" value="1"/>
</dbReference>
<dbReference type="SUPFAM" id="SSF101152">
    <property type="entry name" value="Mob1/phocein"/>
    <property type="match status" value="1"/>
</dbReference>
<gene>
    <name type="primary">Mob4</name>
    <name type="synonym">Mob3</name>
    <name type="synonym">Mobkl1</name>
    <name type="synonym">Phocn</name>
    <name type="synonym">Prei3</name>
</gene>
<sequence>MVMAEGTAVLRRNRPGTKAQDFYNWPDESFDEMDSTLAVQQYIQQNIRADCSNIDKILEPPEGQDEGVWKYEHLRQFCLELNGLAVKLQSECHPDTCTQMTATEQWIFLCAAHKTPKECPAIDYTRHTLDGAACLLNSNKYFPSRVSIKESSVAKLGSVCRRIYRIFSHAYFHHRQIFDEYENETFLCHRFTKFVMKYNLMSKDNLIVPILEEEVQNSVSGESEA</sequence>
<keyword id="KW-0963">Cytoplasm</keyword>
<keyword id="KW-0333">Golgi apparatus</keyword>
<keyword id="KW-0472">Membrane</keyword>
<keyword id="KW-0479">Metal-binding</keyword>
<keyword id="KW-0597">Phosphoprotein</keyword>
<keyword id="KW-1185">Reference proteome</keyword>
<keyword id="KW-0813">Transport</keyword>
<keyword id="KW-0862">Zinc</keyword>
<evidence type="ECO:0000250" key="1"/>
<evidence type="ECO:0000250" key="2">
    <source>
        <dbReference type="UniProtKB" id="Q9Y3A3"/>
    </source>
</evidence>
<evidence type="ECO:0000269" key="3">
    <source>
    </source>
</evidence>
<evidence type="ECO:0000269" key="4">
    <source>
    </source>
</evidence>
<evidence type="ECO:0000305" key="5"/>
<organism>
    <name type="scientific">Rattus norvegicus</name>
    <name type="common">Rat</name>
    <dbReference type="NCBI Taxonomy" id="10116"/>
    <lineage>
        <taxon>Eukaryota</taxon>
        <taxon>Metazoa</taxon>
        <taxon>Chordata</taxon>
        <taxon>Craniata</taxon>
        <taxon>Vertebrata</taxon>
        <taxon>Euteleostomi</taxon>
        <taxon>Mammalia</taxon>
        <taxon>Eutheria</taxon>
        <taxon>Euarchontoglires</taxon>
        <taxon>Glires</taxon>
        <taxon>Rodentia</taxon>
        <taxon>Myomorpha</taxon>
        <taxon>Muroidea</taxon>
        <taxon>Muridae</taxon>
        <taxon>Murinae</taxon>
        <taxon>Rattus</taxon>
    </lineage>
</organism>
<protein>
    <recommendedName>
        <fullName>MOB-like protein phocein</fullName>
    </recommendedName>
    <alternativeName>
        <fullName>Class II mMOB1</fullName>
    </alternativeName>
    <alternativeName>
        <fullName>Mob1 homolog 3</fullName>
        <shortName>Mob3</shortName>
    </alternativeName>
    <alternativeName>
        <fullName>Mps one binder kinase activator-like 3</fullName>
    </alternativeName>
    <alternativeName>
        <fullName>Phocein</fullName>
    </alternativeName>
    <alternativeName>
        <fullName>Preimplantation protein 3</fullName>
    </alternativeName>
</protein>
<reference key="1">
    <citation type="journal article" date="2001" name="Mol. Biol. Cell">
        <title>Molecular cloning and characterization of phocein, a protein found from the Golgi complex to dendritic spines.</title>
        <authorList>
            <person name="Baillat G."/>
            <person name="Moqrich A."/>
            <person name="Castets F."/>
            <person name="Baude A."/>
            <person name="Bailly Y."/>
            <person name="Benmerah A."/>
            <person name="Monneron A."/>
        </authorList>
    </citation>
    <scope>NUCLEOTIDE SEQUENCE [MRNA]</scope>
    <scope>INTERACTION WITH STRN; STRN3 AND STRN4</scope>
    <scope>TISSUE SPECIFICITY</scope>
    <scope>SUBCELLULAR LOCATION</scope>
    <source>
        <strain>Wistar</strain>
        <tissue>Brain</tissue>
    </source>
</reference>
<reference key="2">
    <citation type="journal article" date="2004" name="Genome Res.">
        <title>The status, quality, and expansion of the NIH full-length cDNA project: the Mammalian Gene Collection (MGC).</title>
        <authorList>
            <consortium name="The MGC Project Team"/>
        </authorList>
    </citation>
    <scope>NUCLEOTIDE SEQUENCE [LARGE SCALE MRNA]</scope>
    <source>
        <tissue>Heart</tissue>
    </source>
</reference>
<reference key="3">
    <citation type="journal article" date="2002" name="J. Biol. Chem.">
        <title>Interactions of phocein with nucleoside-diphosphate kinase, Eps15, and Dynamin I.</title>
        <authorList>
            <person name="Baillat G."/>
            <person name="Gaillard S."/>
            <person name="Castets F."/>
            <person name="Monneron A."/>
        </authorList>
    </citation>
    <scope>INTERACTION WITH DNM1 AND EPS15</scope>
    <scope>SUBUNIT</scope>
    <scope>SUBCELLULAR LOCATION</scope>
</reference>
<reference key="4">
    <citation type="journal article" date="2012" name="Mol. Biol. Cell">
        <title>CTTNBP2, but not CTTNBP2NL, regulates dendritic spinogenesis and synaptic distribution of the striatin-PP2A complex.</title>
        <authorList>
            <person name="Chen Y.K."/>
            <person name="Chen C.Y."/>
            <person name="Hu H.T."/>
            <person name="Hsueh Y.P."/>
        </authorList>
    </citation>
    <scope>INTERACTION WITH CTTNBP2</scope>
</reference>
<feature type="chain" id="PRO_0000193578" description="MOB-like protein phocein">
    <location>
        <begin position="1"/>
        <end position="225"/>
    </location>
</feature>
<feature type="binding site" evidence="2">
    <location>
        <position position="92"/>
    </location>
    <ligand>
        <name>Zn(2+)</name>
        <dbReference type="ChEBI" id="CHEBI:29105"/>
        <label>1</label>
    </ligand>
</feature>
<feature type="binding site" evidence="1">
    <location>
        <position position="92"/>
    </location>
    <ligand>
        <name>Zn(2+)</name>
        <dbReference type="ChEBI" id="CHEBI:29105"/>
    </ligand>
</feature>
<feature type="binding site" evidence="2">
    <location>
        <position position="97"/>
    </location>
    <ligand>
        <name>Zn(2+)</name>
        <dbReference type="ChEBI" id="CHEBI:29105"/>
        <label>1</label>
    </ligand>
</feature>
<feature type="binding site" evidence="1">
    <location>
        <position position="97"/>
    </location>
    <ligand>
        <name>Zn(2+)</name>
        <dbReference type="ChEBI" id="CHEBI:29105"/>
    </ligand>
</feature>
<feature type="binding site" evidence="2">
    <location>
        <position position="110"/>
    </location>
    <ligand>
        <name>Zn(2+)</name>
        <dbReference type="ChEBI" id="CHEBI:29105"/>
        <label>2</label>
    </ligand>
</feature>
<feature type="binding site" evidence="2">
    <location>
        <position position="113"/>
    </location>
    <ligand>
        <name>Zn(2+)</name>
        <dbReference type="ChEBI" id="CHEBI:29105"/>
        <label>2</label>
    </ligand>
</feature>
<feature type="binding site" evidence="2">
    <location>
        <position position="119"/>
    </location>
    <ligand>
        <name>Zn(2+)</name>
        <dbReference type="ChEBI" id="CHEBI:29105"/>
        <label>2</label>
    </ligand>
</feature>
<feature type="binding site" evidence="2">
    <location>
        <position position="127"/>
    </location>
    <ligand>
        <name>Zn(2+)</name>
        <dbReference type="ChEBI" id="CHEBI:29105"/>
        <label>2</label>
    </ligand>
</feature>
<feature type="binding site" evidence="2">
    <location>
        <position position="169"/>
    </location>
    <ligand>
        <name>Zn(2+)</name>
        <dbReference type="ChEBI" id="CHEBI:29105"/>
        <label>1</label>
    </ligand>
</feature>
<feature type="binding site" evidence="1">
    <location>
        <position position="169"/>
    </location>
    <ligand>
        <name>Zn(2+)</name>
        <dbReference type="ChEBI" id="CHEBI:29105"/>
    </ligand>
</feature>
<feature type="binding site" evidence="2">
    <location>
        <position position="174"/>
    </location>
    <ligand>
        <name>Zn(2+)</name>
        <dbReference type="ChEBI" id="CHEBI:29105"/>
        <label>1</label>
    </ligand>
</feature>
<feature type="binding site" evidence="1">
    <location>
        <position position="174"/>
    </location>
    <ligand>
        <name>Zn(2+)</name>
        <dbReference type="ChEBI" id="CHEBI:29105"/>
    </ligand>
</feature>